<evidence type="ECO:0000250" key="1">
    <source>
        <dbReference type="UniProtKB" id="Q15904"/>
    </source>
</evidence>
<evidence type="ECO:0000250" key="2">
    <source>
        <dbReference type="UniProtKB" id="Q9R1Q9"/>
    </source>
</evidence>
<evidence type="ECO:0000255" key="3"/>
<evidence type="ECO:0000255" key="4">
    <source>
        <dbReference type="PROSITE-ProRule" id="PRU00498"/>
    </source>
</evidence>
<evidence type="ECO:0000269" key="5">
    <source>
    </source>
</evidence>
<evidence type="ECO:0000305" key="6"/>
<evidence type="ECO:0000312" key="7">
    <source>
        <dbReference type="Proteomes" id="UP000001940"/>
    </source>
</evidence>
<evidence type="ECO:0000312" key="8">
    <source>
        <dbReference type="WormBase" id="Y55H10A.1"/>
    </source>
</evidence>
<gene>
    <name evidence="8" type="primary">vha-19</name>
    <name evidence="8" type="ORF">Y55H10A.1</name>
</gene>
<protein>
    <recommendedName>
        <fullName evidence="6">V-type proton ATPase subunit S1</fullName>
        <shortName evidence="6">V-ATPase subunit S1</shortName>
    </recommendedName>
    <alternativeName>
        <fullName evidence="6">V-ATPase Ac45 subunit</fullName>
    </alternativeName>
</protein>
<reference evidence="7" key="1">
    <citation type="journal article" date="1998" name="Science">
        <title>Genome sequence of the nematode C. elegans: a platform for investigating biology.</title>
        <authorList>
            <consortium name="The C. elegans sequencing consortium"/>
        </authorList>
    </citation>
    <scope>NUCLEOTIDE SEQUENCE [LARGE SCALE GENOMIC DNA]</scope>
    <source>
        <strain evidence="7">Bristol N2</strain>
    </source>
</reference>
<reference evidence="6" key="2">
    <citation type="journal article" date="2012" name="PLoS ONE">
        <title>VHA-19 is essential in Caenorhabditis elegans oocytes for embryogenesis and is involved in trafficking in oocytes.</title>
        <authorList>
            <person name="Knight A.J."/>
            <person name="Johnson N.M."/>
            <person name="Behm C.A."/>
        </authorList>
    </citation>
    <scope>FUNCTION</scope>
    <scope>TISSUE SPECIFICITY</scope>
    <scope>DEVELOPMENTAL STAGE</scope>
    <scope>DISRUPTION PHENOTYPE</scope>
</reference>
<accession>Q9TYW1</accession>
<dbReference type="EMBL" id="BX284604">
    <property type="protein sequence ID" value="CCD62204.1"/>
    <property type="molecule type" value="Genomic_DNA"/>
</dbReference>
<dbReference type="PIR" id="T33763">
    <property type="entry name" value="T33763"/>
</dbReference>
<dbReference type="RefSeq" id="NP_500332.1">
    <property type="nucleotide sequence ID" value="NM_067931.5"/>
</dbReference>
<dbReference type="FunCoup" id="Q9TYW1">
    <property type="interactions" value="249"/>
</dbReference>
<dbReference type="STRING" id="6239.Y55H10A.1.1"/>
<dbReference type="TCDB" id="8.A.107.1.4">
    <property type="family name" value="the v-type atpase assembly factor, atp6ap1 (atp6ap1) family"/>
</dbReference>
<dbReference type="GlyCosmos" id="Q9TYW1">
    <property type="glycosylation" value="4 sites, No reported glycans"/>
</dbReference>
<dbReference type="PaxDb" id="6239-Y55H10A.1"/>
<dbReference type="PeptideAtlas" id="Q9TYW1"/>
<dbReference type="EnsemblMetazoa" id="Y55H10A.1.1">
    <property type="protein sequence ID" value="Y55H10A.1.1"/>
    <property type="gene ID" value="WBGene00021952"/>
</dbReference>
<dbReference type="GeneID" id="177103"/>
<dbReference type="KEGG" id="cel:CELE_Y55H10A.1"/>
<dbReference type="UCSC" id="Y55H10A.1">
    <property type="organism name" value="c. elegans"/>
</dbReference>
<dbReference type="AGR" id="WB:WBGene00021952"/>
<dbReference type="CTD" id="177103"/>
<dbReference type="WormBase" id="Y55H10A.1">
    <property type="protein sequence ID" value="CE19628"/>
    <property type="gene ID" value="WBGene00021952"/>
    <property type="gene designation" value="vha-19"/>
</dbReference>
<dbReference type="eggNOG" id="KOG3868">
    <property type="taxonomic scope" value="Eukaryota"/>
</dbReference>
<dbReference type="GeneTree" id="ENSGT00940000170675"/>
<dbReference type="HOGENOM" id="CLU_627482_0_0_1"/>
<dbReference type="InParanoid" id="Q9TYW1"/>
<dbReference type="OMA" id="YVMLQSV"/>
<dbReference type="OrthoDB" id="9985059at2759"/>
<dbReference type="Reactome" id="R-CEL-77387">
    <property type="pathway name" value="Insulin receptor recycling"/>
</dbReference>
<dbReference type="Reactome" id="R-CEL-917977">
    <property type="pathway name" value="Transferrin endocytosis and recycling"/>
</dbReference>
<dbReference type="Reactome" id="R-CEL-983712">
    <property type="pathway name" value="Ion channel transport"/>
</dbReference>
<dbReference type="PRO" id="PR:Q9TYW1"/>
<dbReference type="Proteomes" id="UP000001940">
    <property type="component" value="Chromosome IV"/>
</dbReference>
<dbReference type="Bgee" id="WBGene00021952">
    <property type="expression patterns" value="Expressed in larva and 4 other cell types or tissues"/>
</dbReference>
<dbReference type="GO" id="GO:0045121">
    <property type="term" value="C:membrane raft"/>
    <property type="evidence" value="ECO:0007005"/>
    <property type="project" value="WormBase"/>
</dbReference>
<dbReference type="GO" id="GO:0033176">
    <property type="term" value="C:proton-transporting V-type ATPase complex"/>
    <property type="evidence" value="ECO:0000318"/>
    <property type="project" value="GO_Central"/>
</dbReference>
<dbReference type="GO" id="GO:0001671">
    <property type="term" value="F:ATPase activator activity"/>
    <property type="evidence" value="ECO:0000318"/>
    <property type="project" value="GO_Central"/>
</dbReference>
<dbReference type="GO" id="GO:0009992">
    <property type="term" value="P:intracellular water homeostasis"/>
    <property type="evidence" value="ECO:0000315"/>
    <property type="project" value="UniProtKB"/>
</dbReference>
<dbReference type="GO" id="GO:0060282">
    <property type="term" value="P:positive regulation of oocyte development"/>
    <property type="evidence" value="ECO:0000315"/>
    <property type="project" value="UniProtKB"/>
</dbReference>
<dbReference type="GO" id="GO:0090314">
    <property type="term" value="P:positive regulation of protein targeting to membrane"/>
    <property type="evidence" value="ECO:0000315"/>
    <property type="project" value="UniProtKB"/>
</dbReference>
<dbReference type="GO" id="GO:0030641">
    <property type="term" value="P:regulation of cellular pH"/>
    <property type="evidence" value="ECO:0000318"/>
    <property type="project" value="GO_Central"/>
</dbReference>
<dbReference type="InterPro" id="IPR008388">
    <property type="entry name" value="Ac45_acc_su"/>
</dbReference>
<dbReference type="InterPro" id="IPR046756">
    <property type="entry name" value="VAS1/VOA1_TM"/>
</dbReference>
<dbReference type="PANTHER" id="PTHR12471:SF7">
    <property type="entry name" value="V-TYPE PROTON ATPASE SUBUNIT S1"/>
    <property type="match status" value="1"/>
</dbReference>
<dbReference type="PANTHER" id="PTHR12471">
    <property type="entry name" value="VACUOLAR ATP SYNTHASE SUBUNIT S1"/>
    <property type="match status" value="1"/>
</dbReference>
<dbReference type="Pfam" id="PF20520">
    <property type="entry name" value="Ac45-VOA1_TM"/>
    <property type="match status" value="1"/>
</dbReference>
<keyword id="KW-0325">Glycoprotein</keyword>
<keyword id="KW-0472">Membrane</keyword>
<keyword id="KW-1185">Reference proteome</keyword>
<keyword id="KW-0732">Signal</keyword>
<keyword id="KW-0812">Transmembrane</keyword>
<keyword id="KW-1133">Transmembrane helix</keyword>
<feature type="signal peptide" evidence="3">
    <location>
        <begin position="1"/>
        <end position="16"/>
    </location>
</feature>
<feature type="chain" id="PRO_5004338122" description="V-type proton ATPase subunit S1" evidence="3">
    <location>
        <begin position="17"/>
        <end position="451"/>
    </location>
</feature>
<feature type="propeptide" id="PRO_0000454047" evidence="2">
    <location>
        <begin position="17"/>
        <end status="unknown"/>
    </location>
</feature>
<feature type="topological domain" description="Lumenal" evidence="6">
    <location>
        <begin position="17"/>
        <end position="407"/>
    </location>
</feature>
<feature type="transmembrane region" description="Helical" evidence="3">
    <location>
        <begin position="408"/>
        <end position="428"/>
    </location>
</feature>
<feature type="topological domain" description="Cytoplasmic" evidence="6">
    <location>
        <begin position="429"/>
        <end position="451"/>
    </location>
</feature>
<feature type="glycosylation site" description="N-linked (GlcNAc...) asparagine" evidence="4">
    <location>
        <position position="191"/>
    </location>
</feature>
<feature type="glycosylation site" description="N-linked (GlcNAc...) asparagine" evidence="4">
    <location>
        <position position="235"/>
    </location>
</feature>
<feature type="glycosylation site" description="N-linked (GlcNAc...) asparagine" evidence="4">
    <location>
        <position position="249"/>
    </location>
</feature>
<feature type="glycosylation site" description="N-linked (GlcNAc...) asparagine" evidence="4">
    <location>
        <position position="330"/>
    </location>
</feature>
<comment type="function">
    <text evidence="1 5">Accessory subunit of the proton-transporting vacuolar (V)-ATPase protein pump, which is required for luminal acidification of secretory vesicles (By similarity). In the germline, required for the trafficking of the receptor RME-2 to the oocyte cell membrane where it regulates the uptake of yolk proteins (PubMed:22768351). Also, plays an essential role in osmoregulation in the embryo, probably by regulating the proper formation of the eggshell (PubMed:22768351).</text>
</comment>
<comment type="subunit">
    <text evidence="1">Accessory component of the multisubunit proton-transporting vacuolar (V)-ATPase protein pump.</text>
</comment>
<comment type="subcellular location">
    <subcellularLocation>
        <location evidence="3">Membrane</location>
        <topology evidence="3">Single-pass membrane protein</topology>
    </subcellularLocation>
</comment>
<comment type="tissue specificity">
    <text evidence="5">Expressed in pharynx, hypodermis, intestine, vulval hypodermis and the H-shape excretory cell.</text>
</comment>
<comment type="developmental stage">
    <text evidence="5">Expressed in larvae and adults.</text>
</comment>
<comment type="disruption phenotype">
    <text evidence="5">RNAi-mediated knockdown at the L1 larval stage causes arrest followed by death at the L3/L4 larval stages (PubMed:22768351). RNAi-mediated knockdown at the L4 larval stage does not affect development into adults (PubMed:22768351). However, only 26% of the progeny hatched into larvae which die at the L3 larval stage. RNAi-mediated knockdown at the L4 larval stage or in the germline causes egg compression in their uterus (PubMed:22768351). Fewer oocytes are produced in the oviduct and are endomitotic (PubMed:22768351). This results in a reduced rate of ovulation over time (PubMed:22768351). Oocytes fail to endocytose vitellogenin due to a failure to traffic receptor rme-2 to the cell membrane (PubMed:22768351). Also, embryos display osmotic sensitivity and defect in osmoregulation and cytokinesis probably due to an abnormal eggshell (PubMed:22768351).</text>
</comment>
<comment type="similarity">
    <text evidence="6">Belongs to the vacuolar ATPase subunit S1 family.</text>
</comment>
<sequence>MRVLFAVFSLIMACQAYDAVLFSNSREIGGTPAAKLVESATAEEPVVFIVNPDFTLGQFSVKANAYTSEPSADYLAKSVKNSNFHESQYFSHQIEATQAQWLSSADQYSAGSPIYIIYGEEWTSMEQLAEQLISKIDNSVGIITSTDAVAHEKSSRVKRVATDEFNSDSENSAAAEANGGFPFPLVIPPYNQTFYSVKPTNGHSCLFYLEGLTVVVEQKKEKVLYYANAYIPGSNFTWAYSETDVTCPNGTIGDFIFKIHLTLENDITGMQGTSKKAFTMKKGDKIDFDLTFTGDLFGYWALNKASASNLAISGYDPYKSASVDGSKVVNGSATQYTKLNSVAGWSLACGQSQAVFFPTNEQSVRIGVALMNTQIQLFNYQNPEKWVESAHFTLQTEDCTGTFSSGSWMGIVSALVLIAGLMFGYVMLQSVQTMDRFDDPKQRQIVINVRE</sequence>
<name>VAS1_CAEEL</name>
<organism evidence="7">
    <name type="scientific">Caenorhabditis elegans</name>
    <dbReference type="NCBI Taxonomy" id="6239"/>
    <lineage>
        <taxon>Eukaryota</taxon>
        <taxon>Metazoa</taxon>
        <taxon>Ecdysozoa</taxon>
        <taxon>Nematoda</taxon>
        <taxon>Chromadorea</taxon>
        <taxon>Rhabditida</taxon>
        <taxon>Rhabditina</taxon>
        <taxon>Rhabditomorpha</taxon>
        <taxon>Rhabditoidea</taxon>
        <taxon>Rhabditidae</taxon>
        <taxon>Peloderinae</taxon>
        <taxon>Caenorhabditis</taxon>
    </lineage>
</organism>
<proteinExistence type="evidence at transcript level"/>